<gene>
    <name evidence="1" type="primary">proS</name>
    <name type="ordered locus">SBO_0183</name>
</gene>
<proteinExistence type="inferred from homology"/>
<organism>
    <name type="scientific">Shigella boydii serotype 4 (strain Sb227)</name>
    <dbReference type="NCBI Taxonomy" id="300268"/>
    <lineage>
        <taxon>Bacteria</taxon>
        <taxon>Pseudomonadati</taxon>
        <taxon>Pseudomonadota</taxon>
        <taxon>Gammaproteobacteria</taxon>
        <taxon>Enterobacterales</taxon>
        <taxon>Enterobacteriaceae</taxon>
        <taxon>Shigella</taxon>
    </lineage>
</organism>
<comment type="function">
    <text evidence="1">Catalyzes the attachment of proline to tRNA(Pro) in a two-step reaction: proline is first activated by ATP to form Pro-AMP and then transferred to the acceptor end of tRNA(Pro). As ProRS can inadvertently accommodate and process non-cognate amino acids such as alanine and cysteine, to avoid such errors it has two additional distinct editing activities against alanine. One activity is designated as 'pretransfer' editing and involves the tRNA(Pro)-independent hydrolysis of activated Ala-AMP. The other activity is designated 'posttransfer' editing and involves deacylation of mischarged Ala-tRNA(Pro). The misacylated Cys-tRNA(Pro) is not edited by ProRS.</text>
</comment>
<comment type="catalytic activity">
    <reaction evidence="1">
        <text>tRNA(Pro) + L-proline + ATP = L-prolyl-tRNA(Pro) + AMP + diphosphate</text>
        <dbReference type="Rhea" id="RHEA:14305"/>
        <dbReference type="Rhea" id="RHEA-COMP:9700"/>
        <dbReference type="Rhea" id="RHEA-COMP:9702"/>
        <dbReference type="ChEBI" id="CHEBI:30616"/>
        <dbReference type="ChEBI" id="CHEBI:33019"/>
        <dbReference type="ChEBI" id="CHEBI:60039"/>
        <dbReference type="ChEBI" id="CHEBI:78442"/>
        <dbReference type="ChEBI" id="CHEBI:78532"/>
        <dbReference type="ChEBI" id="CHEBI:456215"/>
        <dbReference type="EC" id="6.1.1.15"/>
    </reaction>
</comment>
<comment type="subunit">
    <text evidence="1">Homodimer.</text>
</comment>
<comment type="subcellular location">
    <subcellularLocation>
        <location evidence="1">Cytoplasm</location>
    </subcellularLocation>
</comment>
<comment type="domain">
    <text evidence="1">Consists of three domains: the N-terminal catalytic domain, the editing domain and the C-terminal anticodon-binding domain.</text>
</comment>
<comment type="similarity">
    <text evidence="1">Belongs to the class-II aminoacyl-tRNA synthetase family. ProS type 1 subfamily.</text>
</comment>
<accession>Q325U6</accession>
<feature type="chain" id="PRO_0000248763" description="Proline--tRNA ligase">
    <location>
        <begin position="1"/>
        <end position="572"/>
    </location>
</feature>
<sequence length="572" mass="63623">MRTSQYLLSTLKETPADAEVISHQLMLRAGMIRKLASGLYTWLPTGVRVLKKVENIVREEMNNAGAIEVSMPVVQPADLWQESGRWEQYGPELLRFVDRGERPFVLGPTHEEVITDLIRNELSSYKQLPLNFYQIQTKFRDEVRPRFGVMRSREFLMKDAYSFHTSQESLQETYDAMYAAYSKIFSRMGLDFRAVQADTGSIGGSASHEFQVLAQSGEDDVVFSDTSDYAANIELAEAIAPKEPRAAATQEMTLVDTPNAKTIAELVEQFNLPIEKTVKTLLVKAVEGSSFPLVALLVRGDHELNEVKAEKLPQVASPLTFATEEEIRAVVKAGPGSLGPVNMPIPVVIDRTVAAMSDFAAGANIDGKHYFGINWDRDVATPEVADIRNVVAGDPSPDGQGTLLIKRGIEVGHIFQLGTKYSEALKASVQGEDGRNQILTMGCYGIGVTRVVAAAIEQNYDERGIVWPDAIAPFQVAILPMNMHKSFRVQELAEKLYSELRAQGIEVLLDDRKERPGVMFADMELIGIPHTIVLGDRNLDNDDIEYKYRRNGEKQLIKTGDIVEYLVKQIKG</sequence>
<name>SYP_SHIBS</name>
<evidence type="ECO:0000255" key="1">
    <source>
        <dbReference type="HAMAP-Rule" id="MF_01569"/>
    </source>
</evidence>
<reference key="1">
    <citation type="journal article" date="2005" name="Nucleic Acids Res.">
        <title>Genome dynamics and diversity of Shigella species, the etiologic agents of bacillary dysentery.</title>
        <authorList>
            <person name="Yang F."/>
            <person name="Yang J."/>
            <person name="Zhang X."/>
            <person name="Chen L."/>
            <person name="Jiang Y."/>
            <person name="Yan Y."/>
            <person name="Tang X."/>
            <person name="Wang J."/>
            <person name="Xiong Z."/>
            <person name="Dong J."/>
            <person name="Xue Y."/>
            <person name="Zhu Y."/>
            <person name="Xu X."/>
            <person name="Sun L."/>
            <person name="Chen S."/>
            <person name="Nie H."/>
            <person name="Peng J."/>
            <person name="Xu J."/>
            <person name="Wang Y."/>
            <person name="Yuan Z."/>
            <person name="Wen Y."/>
            <person name="Yao Z."/>
            <person name="Shen Y."/>
            <person name="Qiang B."/>
            <person name="Hou Y."/>
            <person name="Yu J."/>
            <person name="Jin Q."/>
        </authorList>
    </citation>
    <scope>NUCLEOTIDE SEQUENCE [LARGE SCALE GENOMIC DNA]</scope>
    <source>
        <strain>Sb227</strain>
    </source>
</reference>
<protein>
    <recommendedName>
        <fullName evidence="1">Proline--tRNA ligase</fullName>
        <ecNumber evidence="1">6.1.1.15</ecNumber>
    </recommendedName>
    <alternativeName>
        <fullName evidence="1">Prolyl-tRNA synthetase</fullName>
        <shortName evidence="1">ProRS</shortName>
    </alternativeName>
</protein>
<dbReference type="EC" id="6.1.1.15" evidence="1"/>
<dbReference type="EMBL" id="CP000036">
    <property type="protein sequence ID" value="ABB64912.1"/>
    <property type="molecule type" value="Genomic_DNA"/>
</dbReference>
<dbReference type="RefSeq" id="WP_001260712.1">
    <property type="nucleotide sequence ID" value="NC_007613.1"/>
</dbReference>
<dbReference type="SMR" id="Q325U6"/>
<dbReference type="GeneID" id="93777229"/>
<dbReference type="KEGG" id="sbo:SBO_0183"/>
<dbReference type="HOGENOM" id="CLU_016739_0_0_6"/>
<dbReference type="Proteomes" id="UP000007067">
    <property type="component" value="Chromosome"/>
</dbReference>
<dbReference type="GO" id="GO:0005829">
    <property type="term" value="C:cytosol"/>
    <property type="evidence" value="ECO:0007669"/>
    <property type="project" value="TreeGrafter"/>
</dbReference>
<dbReference type="GO" id="GO:0002161">
    <property type="term" value="F:aminoacyl-tRNA deacylase activity"/>
    <property type="evidence" value="ECO:0007669"/>
    <property type="project" value="InterPro"/>
</dbReference>
<dbReference type="GO" id="GO:0005524">
    <property type="term" value="F:ATP binding"/>
    <property type="evidence" value="ECO:0007669"/>
    <property type="project" value="UniProtKB-UniRule"/>
</dbReference>
<dbReference type="GO" id="GO:0004827">
    <property type="term" value="F:proline-tRNA ligase activity"/>
    <property type="evidence" value="ECO:0007669"/>
    <property type="project" value="UniProtKB-UniRule"/>
</dbReference>
<dbReference type="GO" id="GO:0006433">
    <property type="term" value="P:prolyl-tRNA aminoacylation"/>
    <property type="evidence" value="ECO:0007669"/>
    <property type="project" value="UniProtKB-UniRule"/>
</dbReference>
<dbReference type="CDD" id="cd04334">
    <property type="entry name" value="ProRS-INS"/>
    <property type="match status" value="1"/>
</dbReference>
<dbReference type="CDD" id="cd00861">
    <property type="entry name" value="ProRS_anticodon_short"/>
    <property type="match status" value="1"/>
</dbReference>
<dbReference type="CDD" id="cd00779">
    <property type="entry name" value="ProRS_core_prok"/>
    <property type="match status" value="1"/>
</dbReference>
<dbReference type="FunFam" id="3.30.930.10:FF:000012">
    <property type="entry name" value="Proline--tRNA ligase"/>
    <property type="match status" value="1"/>
</dbReference>
<dbReference type="FunFam" id="3.30.930.10:FF:000097">
    <property type="entry name" value="Proline--tRNA ligase"/>
    <property type="match status" value="1"/>
</dbReference>
<dbReference type="FunFam" id="3.40.50.800:FF:000006">
    <property type="entry name" value="Proline--tRNA ligase"/>
    <property type="match status" value="1"/>
</dbReference>
<dbReference type="FunFam" id="3.90.960.10:FF:000001">
    <property type="entry name" value="Proline--tRNA ligase"/>
    <property type="match status" value="1"/>
</dbReference>
<dbReference type="Gene3D" id="3.40.50.800">
    <property type="entry name" value="Anticodon-binding domain"/>
    <property type="match status" value="1"/>
</dbReference>
<dbReference type="Gene3D" id="3.30.930.10">
    <property type="entry name" value="Bira Bifunctional Protein, Domain 2"/>
    <property type="match status" value="2"/>
</dbReference>
<dbReference type="Gene3D" id="3.90.960.10">
    <property type="entry name" value="YbaK/aminoacyl-tRNA synthetase-associated domain"/>
    <property type="match status" value="1"/>
</dbReference>
<dbReference type="HAMAP" id="MF_01569">
    <property type="entry name" value="Pro_tRNA_synth_type1"/>
    <property type="match status" value="1"/>
</dbReference>
<dbReference type="InterPro" id="IPR002314">
    <property type="entry name" value="aa-tRNA-synt_IIb"/>
</dbReference>
<dbReference type="InterPro" id="IPR006195">
    <property type="entry name" value="aa-tRNA-synth_II"/>
</dbReference>
<dbReference type="InterPro" id="IPR045864">
    <property type="entry name" value="aa-tRNA-synth_II/BPL/LPL"/>
</dbReference>
<dbReference type="InterPro" id="IPR004154">
    <property type="entry name" value="Anticodon-bd"/>
</dbReference>
<dbReference type="InterPro" id="IPR036621">
    <property type="entry name" value="Anticodon-bd_dom_sf"/>
</dbReference>
<dbReference type="InterPro" id="IPR002316">
    <property type="entry name" value="Pro-tRNA-ligase_IIa"/>
</dbReference>
<dbReference type="InterPro" id="IPR004500">
    <property type="entry name" value="Pro-tRNA-synth_IIa_bac-type"/>
</dbReference>
<dbReference type="InterPro" id="IPR023717">
    <property type="entry name" value="Pro-tRNA-Synthase_IIa_type1"/>
</dbReference>
<dbReference type="InterPro" id="IPR050062">
    <property type="entry name" value="Pro-tRNA_synthetase"/>
</dbReference>
<dbReference type="InterPro" id="IPR044140">
    <property type="entry name" value="ProRS_anticodon_short"/>
</dbReference>
<dbReference type="InterPro" id="IPR033730">
    <property type="entry name" value="ProRS_core_prok"/>
</dbReference>
<dbReference type="InterPro" id="IPR036754">
    <property type="entry name" value="YbaK/aa-tRNA-synt-asso_dom_sf"/>
</dbReference>
<dbReference type="InterPro" id="IPR007214">
    <property type="entry name" value="YbaK/aa-tRNA-synth-assoc-dom"/>
</dbReference>
<dbReference type="NCBIfam" id="NF006625">
    <property type="entry name" value="PRK09194.1"/>
    <property type="match status" value="1"/>
</dbReference>
<dbReference type="NCBIfam" id="TIGR00409">
    <property type="entry name" value="proS_fam_II"/>
    <property type="match status" value="1"/>
</dbReference>
<dbReference type="PANTHER" id="PTHR42753">
    <property type="entry name" value="MITOCHONDRIAL RIBOSOME PROTEIN L39/PROLYL-TRNA LIGASE FAMILY MEMBER"/>
    <property type="match status" value="1"/>
</dbReference>
<dbReference type="PANTHER" id="PTHR42753:SF2">
    <property type="entry name" value="PROLINE--TRNA LIGASE"/>
    <property type="match status" value="1"/>
</dbReference>
<dbReference type="Pfam" id="PF03129">
    <property type="entry name" value="HGTP_anticodon"/>
    <property type="match status" value="1"/>
</dbReference>
<dbReference type="Pfam" id="PF00587">
    <property type="entry name" value="tRNA-synt_2b"/>
    <property type="match status" value="1"/>
</dbReference>
<dbReference type="Pfam" id="PF04073">
    <property type="entry name" value="tRNA_edit"/>
    <property type="match status" value="1"/>
</dbReference>
<dbReference type="PIRSF" id="PIRSF001535">
    <property type="entry name" value="ProRS_1"/>
    <property type="match status" value="1"/>
</dbReference>
<dbReference type="PRINTS" id="PR01046">
    <property type="entry name" value="TRNASYNTHPRO"/>
</dbReference>
<dbReference type="SUPFAM" id="SSF52954">
    <property type="entry name" value="Class II aaRS ABD-related"/>
    <property type="match status" value="1"/>
</dbReference>
<dbReference type="SUPFAM" id="SSF55681">
    <property type="entry name" value="Class II aaRS and biotin synthetases"/>
    <property type="match status" value="1"/>
</dbReference>
<dbReference type="SUPFAM" id="SSF55826">
    <property type="entry name" value="YbaK/ProRS associated domain"/>
    <property type="match status" value="1"/>
</dbReference>
<dbReference type="PROSITE" id="PS50862">
    <property type="entry name" value="AA_TRNA_LIGASE_II"/>
    <property type="match status" value="1"/>
</dbReference>
<keyword id="KW-0030">Aminoacyl-tRNA synthetase</keyword>
<keyword id="KW-0067">ATP-binding</keyword>
<keyword id="KW-0963">Cytoplasm</keyword>
<keyword id="KW-0436">Ligase</keyword>
<keyword id="KW-0547">Nucleotide-binding</keyword>
<keyword id="KW-0648">Protein biosynthesis</keyword>